<accession>A5IU61</accession>
<proteinExistence type="inferred from homology"/>
<comment type="function">
    <text evidence="1">Poorly processive, error-prone DNA polymerase involved in untargeted mutagenesis. Copies undamaged DNA at stalled replication forks, which arise in vivo from mismatched or misaligned primer ends. These misaligned primers can be extended by PolIV. Exhibits no 3'-5' exonuclease (proofreading) activity. May be involved in translesional synthesis, in conjunction with the beta clamp from PolIII.</text>
</comment>
<comment type="catalytic activity">
    <reaction evidence="1">
        <text>DNA(n) + a 2'-deoxyribonucleoside 5'-triphosphate = DNA(n+1) + diphosphate</text>
        <dbReference type="Rhea" id="RHEA:22508"/>
        <dbReference type="Rhea" id="RHEA-COMP:17339"/>
        <dbReference type="Rhea" id="RHEA-COMP:17340"/>
        <dbReference type="ChEBI" id="CHEBI:33019"/>
        <dbReference type="ChEBI" id="CHEBI:61560"/>
        <dbReference type="ChEBI" id="CHEBI:173112"/>
        <dbReference type="EC" id="2.7.7.7"/>
    </reaction>
</comment>
<comment type="cofactor">
    <cofactor evidence="1">
        <name>Mg(2+)</name>
        <dbReference type="ChEBI" id="CHEBI:18420"/>
    </cofactor>
    <text evidence="1">Binds 2 magnesium ions per subunit.</text>
</comment>
<comment type="subunit">
    <text evidence="1">Monomer.</text>
</comment>
<comment type="subcellular location">
    <subcellularLocation>
        <location evidence="1">Cytoplasm</location>
    </subcellularLocation>
</comment>
<comment type="similarity">
    <text evidence="1">Belongs to the DNA polymerase type-Y family.</text>
</comment>
<keyword id="KW-0963">Cytoplasm</keyword>
<keyword id="KW-0227">DNA damage</keyword>
<keyword id="KW-0234">DNA repair</keyword>
<keyword id="KW-0235">DNA replication</keyword>
<keyword id="KW-0238">DNA-binding</keyword>
<keyword id="KW-0239">DNA-directed DNA polymerase</keyword>
<keyword id="KW-0460">Magnesium</keyword>
<keyword id="KW-0479">Metal-binding</keyword>
<keyword id="KW-0515">Mutator protein</keyword>
<keyword id="KW-0548">Nucleotidyltransferase</keyword>
<keyword id="KW-0808">Transferase</keyword>
<gene>
    <name evidence="1" type="primary">dinB</name>
    <name type="ordered locus">SaurJH9_1949</name>
</gene>
<sequence>MTERRIIHIDMDYFFAQVEMRDNPKLKGKPVIVGGKASSRGVVSTASYEARKYGVHSAMPMSQAHKLCPNGYFVTSNFGAYRETSAQIMSIFRSYTDKVEPMSLDEAYLDITELVRPDLPASKIAQYIRKDILEQTHLTASAGVSYNKFLAKLASGMNKPDGLTVIDYQNVHDILMTLDIGDFPGVGKASKKVMHDNGIFNGRDLYEKTEFELIRLFGKRGRGLYNKARGIDHSEVKSSRVRKSVGTERTFATDVNDDEEILRKVWELSGKTAERLNKLQKSAKTVTVKIKTYQFETLSKQMSLRDSVSSEEDIYNIAYLLYNDLKDPDVPIRLIGVTVGNLEQSTNKNMTIYDFI</sequence>
<organism>
    <name type="scientific">Staphylococcus aureus (strain JH9)</name>
    <dbReference type="NCBI Taxonomy" id="359786"/>
    <lineage>
        <taxon>Bacteria</taxon>
        <taxon>Bacillati</taxon>
        <taxon>Bacillota</taxon>
        <taxon>Bacilli</taxon>
        <taxon>Bacillales</taxon>
        <taxon>Staphylococcaceae</taxon>
        <taxon>Staphylococcus</taxon>
    </lineage>
</organism>
<reference key="1">
    <citation type="submission" date="2007-05" db="EMBL/GenBank/DDBJ databases">
        <title>Complete sequence of chromosome of Staphylococcus aureus subsp. aureus JH9.</title>
        <authorList>
            <consortium name="US DOE Joint Genome Institute"/>
            <person name="Copeland A."/>
            <person name="Lucas S."/>
            <person name="Lapidus A."/>
            <person name="Barry K."/>
            <person name="Detter J.C."/>
            <person name="Glavina del Rio T."/>
            <person name="Hammon N."/>
            <person name="Israni S."/>
            <person name="Pitluck S."/>
            <person name="Chain P."/>
            <person name="Malfatti S."/>
            <person name="Shin M."/>
            <person name="Vergez L."/>
            <person name="Schmutz J."/>
            <person name="Larimer F."/>
            <person name="Land M."/>
            <person name="Hauser L."/>
            <person name="Kyrpides N."/>
            <person name="Kim E."/>
            <person name="Tomasz A."/>
            <person name="Richardson P."/>
        </authorList>
    </citation>
    <scope>NUCLEOTIDE SEQUENCE [LARGE SCALE GENOMIC DNA]</scope>
    <source>
        <strain>JH9</strain>
    </source>
</reference>
<feature type="chain" id="PRO_1000084945" description="DNA polymerase IV">
    <location>
        <begin position="1"/>
        <end position="356"/>
    </location>
</feature>
<feature type="domain" description="UmuC" evidence="1">
    <location>
        <begin position="6"/>
        <end position="187"/>
    </location>
</feature>
<feature type="active site" evidence="1">
    <location>
        <position position="106"/>
    </location>
</feature>
<feature type="binding site" evidence="1">
    <location>
        <position position="10"/>
    </location>
    <ligand>
        <name>Mg(2+)</name>
        <dbReference type="ChEBI" id="CHEBI:18420"/>
    </ligand>
</feature>
<feature type="binding site" evidence="1">
    <location>
        <position position="105"/>
    </location>
    <ligand>
        <name>Mg(2+)</name>
        <dbReference type="ChEBI" id="CHEBI:18420"/>
    </ligand>
</feature>
<feature type="site" description="Substrate discrimination" evidence="1">
    <location>
        <position position="15"/>
    </location>
</feature>
<dbReference type="EC" id="2.7.7.7" evidence="1"/>
<dbReference type="EMBL" id="CP000703">
    <property type="protein sequence ID" value="ABQ49734.1"/>
    <property type="molecule type" value="Genomic_DNA"/>
</dbReference>
<dbReference type="RefSeq" id="WP_000140171.1">
    <property type="nucleotide sequence ID" value="NC_009487.1"/>
</dbReference>
<dbReference type="SMR" id="A5IU61"/>
<dbReference type="KEGG" id="saj:SaurJH9_1949"/>
<dbReference type="HOGENOM" id="CLU_012348_1_2_9"/>
<dbReference type="GO" id="GO:0005829">
    <property type="term" value="C:cytosol"/>
    <property type="evidence" value="ECO:0007669"/>
    <property type="project" value="TreeGrafter"/>
</dbReference>
<dbReference type="GO" id="GO:0003684">
    <property type="term" value="F:damaged DNA binding"/>
    <property type="evidence" value="ECO:0007669"/>
    <property type="project" value="InterPro"/>
</dbReference>
<dbReference type="GO" id="GO:0003887">
    <property type="term" value="F:DNA-directed DNA polymerase activity"/>
    <property type="evidence" value="ECO:0007669"/>
    <property type="project" value="UniProtKB-UniRule"/>
</dbReference>
<dbReference type="GO" id="GO:0000287">
    <property type="term" value="F:magnesium ion binding"/>
    <property type="evidence" value="ECO:0007669"/>
    <property type="project" value="UniProtKB-UniRule"/>
</dbReference>
<dbReference type="GO" id="GO:0006261">
    <property type="term" value="P:DNA-templated DNA replication"/>
    <property type="evidence" value="ECO:0007669"/>
    <property type="project" value="UniProtKB-UniRule"/>
</dbReference>
<dbReference type="GO" id="GO:0042276">
    <property type="term" value="P:error-prone translesion synthesis"/>
    <property type="evidence" value="ECO:0007669"/>
    <property type="project" value="TreeGrafter"/>
</dbReference>
<dbReference type="GO" id="GO:0009432">
    <property type="term" value="P:SOS response"/>
    <property type="evidence" value="ECO:0007669"/>
    <property type="project" value="TreeGrafter"/>
</dbReference>
<dbReference type="CDD" id="cd03586">
    <property type="entry name" value="PolY_Pol_IV_kappa"/>
    <property type="match status" value="1"/>
</dbReference>
<dbReference type="FunFam" id="3.30.1490.100:FF:000004">
    <property type="entry name" value="DNA polymerase IV"/>
    <property type="match status" value="1"/>
</dbReference>
<dbReference type="FunFam" id="3.40.1170.60:FF:000001">
    <property type="entry name" value="DNA polymerase IV"/>
    <property type="match status" value="1"/>
</dbReference>
<dbReference type="Gene3D" id="3.30.70.270">
    <property type="match status" value="1"/>
</dbReference>
<dbReference type="Gene3D" id="3.40.1170.60">
    <property type="match status" value="1"/>
</dbReference>
<dbReference type="Gene3D" id="1.10.150.20">
    <property type="entry name" value="5' to 3' exonuclease, C-terminal subdomain"/>
    <property type="match status" value="1"/>
</dbReference>
<dbReference type="Gene3D" id="3.30.1490.100">
    <property type="entry name" value="DNA polymerase, Y-family, little finger domain"/>
    <property type="match status" value="1"/>
</dbReference>
<dbReference type="HAMAP" id="MF_01113">
    <property type="entry name" value="DNApol_IV"/>
    <property type="match status" value="1"/>
</dbReference>
<dbReference type="InterPro" id="IPR043502">
    <property type="entry name" value="DNA/RNA_pol_sf"/>
</dbReference>
<dbReference type="InterPro" id="IPR036775">
    <property type="entry name" value="DNA_pol_Y-fam_lit_finger_sf"/>
</dbReference>
<dbReference type="InterPro" id="IPR017961">
    <property type="entry name" value="DNA_pol_Y-fam_little_finger"/>
</dbReference>
<dbReference type="InterPro" id="IPR050116">
    <property type="entry name" value="DNA_polymerase-Y"/>
</dbReference>
<dbReference type="InterPro" id="IPR022880">
    <property type="entry name" value="DNApol_IV"/>
</dbReference>
<dbReference type="InterPro" id="IPR043128">
    <property type="entry name" value="Rev_trsase/Diguanyl_cyclase"/>
</dbReference>
<dbReference type="InterPro" id="IPR001126">
    <property type="entry name" value="UmuC"/>
</dbReference>
<dbReference type="NCBIfam" id="NF002677">
    <property type="entry name" value="PRK02406.1"/>
    <property type="match status" value="1"/>
</dbReference>
<dbReference type="NCBIfam" id="NF010731">
    <property type="entry name" value="PRK14133.1"/>
    <property type="match status" value="1"/>
</dbReference>
<dbReference type="PANTHER" id="PTHR11076:SF33">
    <property type="entry name" value="DNA POLYMERASE KAPPA"/>
    <property type="match status" value="1"/>
</dbReference>
<dbReference type="PANTHER" id="PTHR11076">
    <property type="entry name" value="DNA REPAIR POLYMERASE UMUC / TRANSFERASE FAMILY MEMBER"/>
    <property type="match status" value="1"/>
</dbReference>
<dbReference type="Pfam" id="PF00817">
    <property type="entry name" value="IMS"/>
    <property type="match status" value="1"/>
</dbReference>
<dbReference type="Pfam" id="PF11799">
    <property type="entry name" value="IMS_C"/>
    <property type="match status" value="1"/>
</dbReference>
<dbReference type="SUPFAM" id="SSF56672">
    <property type="entry name" value="DNA/RNA polymerases"/>
    <property type="match status" value="1"/>
</dbReference>
<dbReference type="SUPFAM" id="SSF100879">
    <property type="entry name" value="Lesion bypass DNA polymerase (Y-family), little finger domain"/>
    <property type="match status" value="1"/>
</dbReference>
<dbReference type="PROSITE" id="PS50173">
    <property type="entry name" value="UMUC"/>
    <property type="match status" value="1"/>
</dbReference>
<protein>
    <recommendedName>
        <fullName evidence="1">DNA polymerase IV</fullName>
        <shortName evidence="1">Pol IV</shortName>
        <ecNumber evidence="1">2.7.7.7</ecNumber>
    </recommendedName>
</protein>
<evidence type="ECO:0000255" key="1">
    <source>
        <dbReference type="HAMAP-Rule" id="MF_01113"/>
    </source>
</evidence>
<name>DPO4_STAA9</name>